<feature type="chain" id="PRO_0000280741" description="Probable splicing factor YJU2B">
    <location>
        <begin position="1"/>
        <end position="384"/>
    </location>
</feature>
<feature type="region of interest" description="Disordered" evidence="3">
    <location>
        <begin position="1"/>
        <end position="28"/>
    </location>
</feature>
<feature type="region of interest" description="Disordered" evidence="3">
    <location>
        <begin position="275"/>
        <end position="331"/>
    </location>
</feature>
<feature type="coiled-coil region" evidence="2">
    <location>
        <begin position="183"/>
        <end position="212"/>
    </location>
</feature>
<feature type="compositionally biased region" description="Basic and acidic residues" evidence="3">
    <location>
        <begin position="297"/>
        <end position="331"/>
    </location>
</feature>
<keyword id="KW-0175">Coiled coil</keyword>
<keyword id="KW-0539">Nucleus</keyword>
<keyword id="KW-1185">Reference proteome</keyword>
<comment type="function">
    <text evidence="1">May be involved in mRNA splicing.</text>
</comment>
<comment type="subcellular location">
    <subcellularLocation>
        <location evidence="1">Nucleus</location>
    </subcellularLocation>
</comment>
<comment type="similarity">
    <text evidence="4">Belongs to the CWC16 family.</text>
</comment>
<sequence>MGERKGTNKYYPPDFDPAKHGSLNGYRNSHPLRERARKLSQGILIIRFEMPYNIWCDGCKNHIGMGVRYNAEKKKVGNYYTTPIYRFRMKCHLCVNYIEMQTDPASCDYVIVSGAQRKEERWDMQDNEQILTTEHEQKQRLETDSMFRLEHGVQDKAKLQRAAPSLSELQEVQSAWKDDFAINSLLRSKFREEKKQIKEEEERDQALLTKASLDLKLVPEVEEDKKIAALLKYRSLESYEQKQKKKRSEICNRSWFSPGVDSGQQAPGNTMRKLGIRTKTPSVPGISPVSLGVVRRTSKEENKAEDKSVESPDGSRSRKAEGMCRKEETGCKEEITERTQSECKLNTELTLTTSTLAAQGQTPTIHTVSCLVPNYSDSSCESEG</sequence>
<name>YJU2B_XENLA</name>
<organism>
    <name type="scientific">Xenopus laevis</name>
    <name type="common">African clawed frog</name>
    <dbReference type="NCBI Taxonomy" id="8355"/>
    <lineage>
        <taxon>Eukaryota</taxon>
        <taxon>Metazoa</taxon>
        <taxon>Chordata</taxon>
        <taxon>Craniata</taxon>
        <taxon>Vertebrata</taxon>
        <taxon>Euteleostomi</taxon>
        <taxon>Amphibia</taxon>
        <taxon>Batrachia</taxon>
        <taxon>Anura</taxon>
        <taxon>Pipoidea</taxon>
        <taxon>Pipidae</taxon>
        <taxon>Xenopodinae</taxon>
        <taxon>Xenopus</taxon>
        <taxon>Xenopus</taxon>
    </lineage>
</organism>
<protein>
    <recommendedName>
        <fullName evidence="4">Probable splicing factor YJU2B</fullName>
    </recommendedName>
    <alternativeName>
        <fullName>Coiled-coil domain-containing protein 130</fullName>
    </alternativeName>
</protein>
<dbReference type="EMBL" id="BC075167">
    <property type="protein sequence ID" value="AAH75167.1"/>
    <property type="molecule type" value="mRNA"/>
</dbReference>
<dbReference type="RefSeq" id="NP_001086365.1">
    <property type="nucleotide sequence ID" value="NM_001092896.1"/>
</dbReference>
<dbReference type="SMR" id="Q6DJK9"/>
<dbReference type="DNASU" id="444794"/>
<dbReference type="GeneID" id="444794"/>
<dbReference type="KEGG" id="xla:444794"/>
<dbReference type="AGR" id="Xenbase:XB-GENE-5758053"/>
<dbReference type="CTD" id="444794"/>
<dbReference type="Xenbase" id="XB-GENE-5758053">
    <property type="gene designation" value="yju2b.L"/>
</dbReference>
<dbReference type="OrthoDB" id="360327at2759"/>
<dbReference type="Proteomes" id="UP000186698">
    <property type="component" value="Chromosome 3L"/>
</dbReference>
<dbReference type="Bgee" id="444794">
    <property type="expression patterns" value="Expressed in testis and 19 other cell types or tissues"/>
</dbReference>
<dbReference type="GO" id="GO:0071014">
    <property type="term" value="C:post-mRNA release spliceosomal complex"/>
    <property type="evidence" value="ECO:0000318"/>
    <property type="project" value="GO_Central"/>
</dbReference>
<dbReference type="GO" id="GO:0005684">
    <property type="term" value="C:U2-type spliceosomal complex"/>
    <property type="evidence" value="ECO:0000318"/>
    <property type="project" value="GO_Central"/>
</dbReference>
<dbReference type="GO" id="GO:0000398">
    <property type="term" value="P:mRNA splicing, via spliceosome"/>
    <property type="evidence" value="ECO:0007669"/>
    <property type="project" value="InterPro"/>
</dbReference>
<dbReference type="GO" id="GO:0008380">
    <property type="term" value="P:RNA splicing"/>
    <property type="evidence" value="ECO:0000318"/>
    <property type="project" value="GO_Central"/>
</dbReference>
<dbReference type="InterPro" id="IPR007590">
    <property type="entry name" value="Saf4/Yju2"/>
</dbReference>
<dbReference type="PANTHER" id="PTHR12111">
    <property type="entry name" value="SPLICING FACTOR YJU2"/>
    <property type="match status" value="1"/>
</dbReference>
<dbReference type="PANTHER" id="PTHR12111:SF2">
    <property type="entry name" value="SPLICING FACTOR YJU2B-RELATED"/>
    <property type="match status" value="1"/>
</dbReference>
<dbReference type="Pfam" id="PF04502">
    <property type="entry name" value="Saf4_Yju2"/>
    <property type="match status" value="1"/>
</dbReference>
<proteinExistence type="evidence at transcript level"/>
<gene>
    <name type="primary">yju2b</name>
    <name type="synonym">ccdc130</name>
</gene>
<accession>Q6DJK9</accession>
<evidence type="ECO:0000250" key="1">
    <source>
        <dbReference type="UniProtKB" id="Q9BW85"/>
    </source>
</evidence>
<evidence type="ECO:0000255" key="2"/>
<evidence type="ECO:0000256" key="3">
    <source>
        <dbReference type="SAM" id="MobiDB-lite"/>
    </source>
</evidence>
<evidence type="ECO:0000305" key="4"/>
<reference key="1">
    <citation type="submission" date="2004-06" db="EMBL/GenBank/DDBJ databases">
        <authorList>
            <consortium name="NIH - Xenopus Gene Collection (XGC) project"/>
        </authorList>
    </citation>
    <scope>NUCLEOTIDE SEQUENCE [LARGE SCALE MRNA]</scope>
    <source>
        <tissue>Kidney</tissue>
    </source>
</reference>